<gene>
    <name type="ORF">Kpol_1054p43</name>
</gene>
<accession>A7TID0</accession>
<proteinExistence type="inferred from homology"/>
<evidence type="ECO:0000250" key="1"/>
<evidence type="ECO:0000255" key="2">
    <source>
        <dbReference type="HAMAP-Rule" id="MF_03125"/>
    </source>
</evidence>
<name>PURA_VANPO</name>
<dbReference type="EC" id="6.3.4.4" evidence="2"/>
<dbReference type="EMBL" id="DS480395">
    <property type="protein sequence ID" value="EDO17996.1"/>
    <property type="molecule type" value="Genomic_DNA"/>
</dbReference>
<dbReference type="RefSeq" id="XP_001645854.1">
    <property type="nucleotide sequence ID" value="XM_001645804.1"/>
</dbReference>
<dbReference type="SMR" id="A7TID0"/>
<dbReference type="FunCoup" id="A7TID0">
    <property type="interactions" value="864"/>
</dbReference>
<dbReference type="STRING" id="436907.A7TID0"/>
<dbReference type="GeneID" id="5546260"/>
<dbReference type="KEGG" id="vpo:Kpol_1054p43"/>
<dbReference type="eggNOG" id="KOG1355">
    <property type="taxonomic scope" value="Eukaryota"/>
</dbReference>
<dbReference type="HOGENOM" id="CLU_029848_3_0_1"/>
<dbReference type="InParanoid" id="A7TID0"/>
<dbReference type="OMA" id="FHHAKPI"/>
<dbReference type="OrthoDB" id="10265645at2759"/>
<dbReference type="PhylomeDB" id="A7TID0"/>
<dbReference type="UniPathway" id="UPA00075">
    <property type="reaction ID" value="UER00335"/>
</dbReference>
<dbReference type="Proteomes" id="UP000000267">
    <property type="component" value="Unassembled WGS sequence"/>
</dbReference>
<dbReference type="GO" id="GO:0005737">
    <property type="term" value="C:cytoplasm"/>
    <property type="evidence" value="ECO:0007669"/>
    <property type="project" value="UniProtKB-SubCell"/>
</dbReference>
<dbReference type="GO" id="GO:0004019">
    <property type="term" value="F:adenylosuccinate synthase activity"/>
    <property type="evidence" value="ECO:0007669"/>
    <property type="project" value="UniProtKB-UniRule"/>
</dbReference>
<dbReference type="GO" id="GO:0005525">
    <property type="term" value="F:GTP binding"/>
    <property type="evidence" value="ECO:0007669"/>
    <property type="project" value="UniProtKB-UniRule"/>
</dbReference>
<dbReference type="GO" id="GO:0000287">
    <property type="term" value="F:magnesium ion binding"/>
    <property type="evidence" value="ECO:0007669"/>
    <property type="project" value="UniProtKB-UniRule"/>
</dbReference>
<dbReference type="GO" id="GO:0044208">
    <property type="term" value="P:'de novo' AMP biosynthetic process"/>
    <property type="evidence" value="ECO:0007669"/>
    <property type="project" value="UniProtKB-UniRule"/>
</dbReference>
<dbReference type="GO" id="GO:0046040">
    <property type="term" value="P:IMP metabolic process"/>
    <property type="evidence" value="ECO:0007669"/>
    <property type="project" value="TreeGrafter"/>
</dbReference>
<dbReference type="CDD" id="cd03108">
    <property type="entry name" value="AdSS"/>
    <property type="match status" value="1"/>
</dbReference>
<dbReference type="FunFam" id="3.90.170.10:FF:000001">
    <property type="entry name" value="Adenylosuccinate synthetase"/>
    <property type="match status" value="1"/>
</dbReference>
<dbReference type="FunFam" id="1.10.300.10:FF:000002">
    <property type="entry name" value="Adenylosuccinate synthetase, chloroplastic"/>
    <property type="match status" value="1"/>
</dbReference>
<dbReference type="Gene3D" id="3.40.440.10">
    <property type="entry name" value="Adenylosuccinate Synthetase, subunit A, domain 1"/>
    <property type="match status" value="1"/>
</dbReference>
<dbReference type="Gene3D" id="1.10.300.10">
    <property type="entry name" value="Adenylosuccinate Synthetase, subunit A, domain 2"/>
    <property type="match status" value="1"/>
</dbReference>
<dbReference type="Gene3D" id="3.90.170.10">
    <property type="entry name" value="Adenylosuccinate Synthetase, subunit A, domain 3"/>
    <property type="match status" value="1"/>
</dbReference>
<dbReference type="HAMAP" id="MF_00011">
    <property type="entry name" value="Adenylosucc_synth"/>
    <property type="match status" value="1"/>
</dbReference>
<dbReference type="InterPro" id="IPR018220">
    <property type="entry name" value="Adenylosuccin_syn_GTP-bd"/>
</dbReference>
<dbReference type="InterPro" id="IPR033128">
    <property type="entry name" value="Adenylosuccin_syn_Lys_AS"/>
</dbReference>
<dbReference type="InterPro" id="IPR042109">
    <property type="entry name" value="Adenylosuccinate_synth_dom1"/>
</dbReference>
<dbReference type="InterPro" id="IPR042110">
    <property type="entry name" value="Adenylosuccinate_synth_dom2"/>
</dbReference>
<dbReference type="InterPro" id="IPR042111">
    <property type="entry name" value="Adenylosuccinate_synth_dom3"/>
</dbReference>
<dbReference type="InterPro" id="IPR001114">
    <property type="entry name" value="Adenylosuccinate_synthetase"/>
</dbReference>
<dbReference type="InterPro" id="IPR027417">
    <property type="entry name" value="P-loop_NTPase"/>
</dbReference>
<dbReference type="NCBIfam" id="NF002223">
    <property type="entry name" value="PRK01117.1"/>
    <property type="match status" value="1"/>
</dbReference>
<dbReference type="NCBIfam" id="TIGR00184">
    <property type="entry name" value="purA"/>
    <property type="match status" value="1"/>
</dbReference>
<dbReference type="PANTHER" id="PTHR11846">
    <property type="entry name" value="ADENYLOSUCCINATE SYNTHETASE"/>
    <property type="match status" value="1"/>
</dbReference>
<dbReference type="PANTHER" id="PTHR11846:SF0">
    <property type="entry name" value="ADENYLOSUCCINATE SYNTHETASE"/>
    <property type="match status" value="1"/>
</dbReference>
<dbReference type="Pfam" id="PF00709">
    <property type="entry name" value="Adenylsucc_synt"/>
    <property type="match status" value="1"/>
</dbReference>
<dbReference type="SMART" id="SM00788">
    <property type="entry name" value="Adenylsucc_synt"/>
    <property type="match status" value="1"/>
</dbReference>
<dbReference type="SUPFAM" id="SSF52540">
    <property type="entry name" value="P-loop containing nucleoside triphosphate hydrolases"/>
    <property type="match status" value="1"/>
</dbReference>
<dbReference type="PROSITE" id="PS01266">
    <property type="entry name" value="ADENYLOSUCCIN_SYN_1"/>
    <property type="match status" value="1"/>
</dbReference>
<dbReference type="PROSITE" id="PS00513">
    <property type="entry name" value="ADENYLOSUCCIN_SYN_2"/>
    <property type="match status" value="1"/>
</dbReference>
<comment type="function">
    <text evidence="1">Plays an important role in the de novo pathway and in the salvage pathway of purine nucleotide biosynthesis. Catalyzes the first committed step in the biosynthesis of AMP from IMP (By similarity).</text>
</comment>
<comment type="catalytic activity">
    <reaction evidence="2">
        <text>IMP + L-aspartate + GTP = N(6)-(1,2-dicarboxyethyl)-AMP + GDP + phosphate + 2 H(+)</text>
        <dbReference type="Rhea" id="RHEA:15753"/>
        <dbReference type="ChEBI" id="CHEBI:15378"/>
        <dbReference type="ChEBI" id="CHEBI:29991"/>
        <dbReference type="ChEBI" id="CHEBI:37565"/>
        <dbReference type="ChEBI" id="CHEBI:43474"/>
        <dbReference type="ChEBI" id="CHEBI:57567"/>
        <dbReference type="ChEBI" id="CHEBI:58053"/>
        <dbReference type="ChEBI" id="CHEBI:58189"/>
        <dbReference type="EC" id="6.3.4.4"/>
    </reaction>
</comment>
<comment type="cofactor">
    <cofactor evidence="2">
        <name>Mg(2+)</name>
        <dbReference type="ChEBI" id="CHEBI:18420"/>
    </cofactor>
    <text evidence="2">Binds 1 Mg(2+) ion per subunit.</text>
</comment>
<comment type="pathway">
    <text evidence="2">Purine metabolism; AMP biosynthesis via de novo pathway; AMP from IMP: step 1/2.</text>
</comment>
<comment type="subunit">
    <text evidence="2">Homodimer.</text>
</comment>
<comment type="subcellular location">
    <subcellularLocation>
        <location evidence="2">Cytoplasm</location>
    </subcellularLocation>
</comment>
<comment type="similarity">
    <text evidence="2">Belongs to the adenylosuccinate synthetase family.</text>
</comment>
<protein>
    <recommendedName>
        <fullName evidence="2">Adenylosuccinate synthetase</fullName>
        <shortName evidence="2">AMPSase</shortName>
        <shortName evidence="2">AdSS</shortName>
        <ecNumber evidence="2">6.3.4.4</ecNumber>
    </recommendedName>
    <alternativeName>
        <fullName evidence="2">IMP--aspartate ligase</fullName>
    </alternativeName>
</protein>
<feature type="chain" id="PRO_0000399369" description="Adenylosuccinate synthetase">
    <location>
        <begin position="1"/>
        <end position="432"/>
    </location>
</feature>
<feature type="active site" description="Proton acceptor" evidence="2">
    <location>
        <position position="12"/>
    </location>
</feature>
<feature type="active site" description="Proton donor" evidence="2">
    <location>
        <position position="40"/>
    </location>
</feature>
<feature type="binding site" evidence="2">
    <location>
        <begin position="11"/>
        <end position="17"/>
    </location>
    <ligand>
        <name>GTP</name>
        <dbReference type="ChEBI" id="CHEBI:37565"/>
    </ligand>
</feature>
<feature type="binding site" description="in other chain" evidence="2">
    <location>
        <begin position="12"/>
        <end position="15"/>
    </location>
    <ligand>
        <name>IMP</name>
        <dbReference type="ChEBI" id="CHEBI:58053"/>
        <note>ligand shared between dimeric partners</note>
    </ligand>
</feature>
<feature type="binding site" evidence="2">
    <location>
        <position position="12"/>
    </location>
    <ligand>
        <name>Mg(2+)</name>
        <dbReference type="ChEBI" id="CHEBI:18420"/>
    </ligand>
</feature>
<feature type="binding site" description="in other chain" evidence="2">
    <location>
        <begin position="37"/>
        <end position="40"/>
    </location>
    <ligand>
        <name>IMP</name>
        <dbReference type="ChEBI" id="CHEBI:58053"/>
        <note>ligand shared between dimeric partners</note>
    </ligand>
</feature>
<feature type="binding site" evidence="2">
    <location>
        <begin position="39"/>
        <end position="41"/>
    </location>
    <ligand>
        <name>GTP</name>
        <dbReference type="ChEBI" id="CHEBI:37565"/>
    </ligand>
</feature>
<feature type="binding site" evidence="2">
    <location>
        <position position="39"/>
    </location>
    <ligand>
        <name>Mg(2+)</name>
        <dbReference type="ChEBI" id="CHEBI:18420"/>
    </ligand>
</feature>
<feature type="binding site" description="in other chain" evidence="2">
    <location>
        <position position="134"/>
    </location>
    <ligand>
        <name>IMP</name>
        <dbReference type="ChEBI" id="CHEBI:58053"/>
        <note>ligand shared between dimeric partners</note>
    </ligand>
</feature>
<feature type="binding site" evidence="2">
    <location>
        <position position="148"/>
    </location>
    <ligand>
        <name>IMP</name>
        <dbReference type="ChEBI" id="CHEBI:58053"/>
        <note>ligand shared between dimeric partners</note>
    </ligand>
</feature>
<feature type="binding site" description="in other chain" evidence="2">
    <location>
        <position position="230"/>
    </location>
    <ligand>
        <name>IMP</name>
        <dbReference type="ChEBI" id="CHEBI:58053"/>
        <note>ligand shared between dimeric partners</note>
    </ligand>
</feature>
<feature type="binding site" description="in other chain" evidence="2">
    <location>
        <position position="245"/>
    </location>
    <ligand>
        <name>IMP</name>
        <dbReference type="ChEBI" id="CHEBI:58053"/>
        <note>ligand shared between dimeric partners</note>
    </ligand>
</feature>
<feature type="binding site" evidence="2">
    <location>
        <begin position="305"/>
        <end position="311"/>
    </location>
    <ligand>
        <name>substrate</name>
    </ligand>
</feature>
<feature type="binding site" description="in other chain" evidence="2">
    <location>
        <position position="309"/>
    </location>
    <ligand>
        <name>IMP</name>
        <dbReference type="ChEBI" id="CHEBI:58053"/>
        <note>ligand shared between dimeric partners</note>
    </ligand>
</feature>
<feature type="binding site" evidence="2">
    <location>
        <position position="311"/>
    </location>
    <ligand>
        <name>GTP</name>
        <dbReference type="ChEBI" id="CHEBI:37565"/>
    </ligand>
</feature>
<feature type="binding site" evidence="2">
    <location>
        <begin position="337"/>
        <end position="339"/>
    </location>
    <ligand>
        <name>GTP</name>
        <dbReference type="ChEBI" id="CHEBI:37565"/>
    </ligand>
</feature>
<feature type="binding site" evidence="2">
    <location>
        <begin position="419"/>
        <end position="421"/>
    </location>
    <ligand>
        <name>GTP</name>
        <dbReference type="ChEBI" id="CHEBI:37565"/>
    </ligand>
</feature>
<keyword id="KW-0963">Cytoplasm</keyword>
<keyword id="KW-0342">GTP-binding</keyword>
<keyword id="KW-0436">Ligase</keyword>
<keyword id="KW-0460">Magnesium</keyword>
<keyword id="KW-0479">Metal-binding</keyword>
<keyword id="KW-0547">Nucleotide-binding</keyword>
<keyword id="KW-0658">Purine biosynthesis</keyword>
<keyword id="KW-1185">Reference proteome</keyword>
<reference key="1">
    <citation type="journal article" date="2007" name="Proc. Natl. Acad. Sci. U.S.A.">
        <title>Independent sorting-out of thousands of duplicated gene pairs in two yeast species descended from a whole-genome duplication.</title>
        <authorList>
            <person name="Scannell D.R."/>
            <person name="Frank A.C."/>
            <person name="Conant G.C."/>
            <person name="Byrne K.P."/>
            <person name="Woolfit M."/>
            <person name="Wolfe K.H."/>
        </authorList>
    </citation>
    <scope>NUCLEOTIDE SEQUENCE [LARGE SCALE GENOMIC DNA]</scope>
    <source>
        <strain>ATCC 22028 / DSM 70294 / BCRC 21397 / CBS 2163 / NBRC 10782 / NRRL Y-8283 / UCD 57-17</strain>
    </source>
</reference>
<sequence>MVNVVLGSQWGDEGKGKLVDLLVGKYDIVARCAGGNNAGHTIVVNGIKYDFHMLPSGLVNPNCSNLLGNGVVIHVPSLFSELNNLSEKGLKDCDKRLFISSRAHIVFDFHQHTDKLRELELKGISKDGKNIGTTGKGIGPTYSTKASRSGLRVHHLVNDQPGAWEEFEAKYRRLLKTRRERYGDFEYDPEEELNRYKKYKELLKPMVVDSVFFINNAIANGKKILVEGANALMLDIDFGTYPFVTSSSTGIGGVITGLGVSPRHINEVYGVVKAYTTRVGEGPFPTEQLNEQGEKLQTIGAEFGVTTGRKRRCGWLDLVVLKYSAMINGYTSLNITKLDVLDTFKEIPVGVSYSINGKKLDSFPEDLINLGNVDVEYVTLPGWDQDITKITEFDQLPENAKKYLKFIEDFVGIPIEWVGTGPARESMLHRDV</sequence>
<organism>
    <name type="scientific">Vanderwaltozyma polyspora (strain ATCC 22028 / DSM 70294 / BCRC 21397 / CBS 2163 / NBRC 10782 / NRRL Y-8283 / UCD 57-17)</name>
    <name type="common">Kluyveromyces polysporus</name>
    <dbReference type="NCBI Taxonomy" id="436907"/>
    <lineage>
        <taxon>Eukaryota</taxon>
        <taxon>Fungi</taxon>
        <taxon>Dikarya</taxon>
        <taxon>Ascomycota</taxon>
        <taxon>Saccharomycotina</taxon>
        <taxon>Saccharomycetes</taxon>
        <taxon>Saccharomycetales</taxon>
        <taxon>Saccharomycetaceae</taxon>
        <taxon>Vanderwaltozyma</taxon>
    </lineage>
</organism>